<comment type="function">
    <text evidence="1">Catalyzes the interconversion of 2-phosphoglycerate and 3-phosphoglycerate.</text>
</comment>
<comment type="catalytic activity">
    <reaction evidence="1">
        <text>(2R)-2-phosphoglycerate = (2R)-3-phosphoglycerate</text>
        <dbReference type="Rhea" id="RHEA:15901"/>
        <dbReference type="ChEBI" id="CHEBI:58272"/>
        <dbReference type="ChEBI" id="CHEBI:58289"/>
        <dbReference type="EC" id="5.4.2.11"/>
    </reaction>
</comment>
<comment type="pathway">
    <text evidence="1">Carbohydrate degradation; glycolysis; pyruvate from D-glyceraldehyde 3-phosphate: step 3/5.</text>
</comment>
<comment type="subunit">
    <text evidence="1">Homodimer.</text>
</comment>
<comment type="similarity">
    <text evidence="1">Belongs to the phosphoglycerate mutase family. BPG-dependent PGAM subfamily.</text>
</comment>
<protein>
    <recommendedName>
        <fullName evidence="1">2,3-bisphosphoglycerate-dependent phosphoglycerate mutase</fullName>
        <shortName evidence="1">BPG-dependent PGAM</shortName>
        <shortName evidence="1">PGAM</shortName>
        <shortName evidence="1">Phosphoglyceromutase</shortName>
        <shortName evidence="1">dPGM</shortName>
        <ecNumber evidence="1">5.4.2.11</ecNumber>
    </recommendedName>
</protein>
<organism>
    <name type="scientific">Neisseria meningitidis serogroup C / serotype 2a (strain ATCC 700532 / DSM 15464 / FAM18)</name>
    <dbReference type="NCBI Taxonomy" id="272831"/>
    <lineage>
        <taxon>Bacteria</taxon>
        <taxon>Pseudomonadati</taxon>
        <taxon>Pseudomonadota</taxon>
        <taxon>Betaproteobacteria</taxon>
        <taxon>Neisseriales</taxon>
        <taxon>Neisseriaceae</taxon>
        <taxon>Neisseria</taxon>
    </lineage>
</organism>
<gene>
    <name evidence="1" type="primary">gpmA</name>
    <name type="ordered locus">NMC1524</name>
</gene>
<dbReference type="EC" id="5.4.2.11" evidence="1"/>
<dbReference type="EMBL" id="AM421808">
    <property type="protein sequence ID" value="CAM10725.1"/>
    <property type="molecule type" value="Genomic_DNA"/>
</dbReference>
<dbReference type="RefSeq" id="WP_002220519.1">
    <property type="nucleotide sequence ID" value="NC_008767.1"/>
</dbReference>
<dbReference type="SMR" id="A1KV25"/>
<dbReference type="KEGG" id="nmc:NMC1524"/>
<dbReference type="HOGENOM" id="CLU_033323_1_5_4"/>
<dbReference type="UniPathway" id="UPA00109">
    <property type="reaction ID" value="UER00186"/>
</dbReference>
<dbReference type="Proteomes" id="UP000002286">
    <property type="component" value="Chromosome"/>
</dbReference>
<dbReference type="GO" id="GO:0004619">
    <property type="term" value="F:phosphoglycerate mutase activity"/>
    <property type="evidence" value="ECO:0007669"/>
    <property type="project" value="UniProtKB-EC"/>
</dbReference>
<dbReference type="GO" id="GO:0006094">
    <property type="term" value="P:gluconeogenesis"/>
    <property type="evidence" value="ECO:0007669"/>
    <property type="project" value="UniProtKB-UniRule"/>
</dbReference>
<dbReference type="GO" id="GO:0006096">
    <property type="term" value="P:glycolytic process"/>
    <property type="evidence" value="ECO:0007669"/>
    <property type="project" value="UniProtKB-UniRule"/>
</dbReference>
<dbReference type="CDD" id="cd07067">
    <property type="entry name" value="HP_PGM_like"/>
    <property type="match status" value="1"/>
</dbReference>
<dbReference type="FunFam" id="3.40.50.1240:FF:000003">
    <property type="entry name" value="2,3-bisphosphoglycerate-dependent phosphoglycerate mutase"/>
    <property type="match status" value="1"/>
</dbReference>
<dbReference type="Gene3D" id="3.40.50.1240">
    <property type="entry name" value="Phosphoglycerate mutase-like"/>
    <property type="match status" value="1"/>
</dbReference>
<dbReference type="HAMAP" id="MF_01039">
    <property type="entry name" value="PGAM_GpmA"/>
    <property type="match status" value="1"/>
</dbReference>
<dbReference type="InterPro" id="IPR013078">
    <property type="entry name" value="His_Pase_superF_clade-1"/>
</dbReference>
<dbReference type="InterPro" id="IPR029033">
    <property type="entry name" value="His_PPase_superfam"/>
</dbReference>
<dbReference type="InterPro" id="IPR005952">
    <property type="entry name" value="Phosphogly_mut1"/>
</dbReference>
<dbReference type="NCBIfam" id="TIGR01258">
    <property type="entry name" value="pgm_1"/>
    <property type="match status" value="1"/>
</dbReference>
<dbReference type="NCBIfam" id="NF010713">
    <property type="entry name" value="PRK14115.1"/>
    <property type="match status" value="1"/>
</dbReference>
<dbReference type="NCBIfam" id="NF010716">
    <property type="entry name" value="PRK14118.1"/>
    <property type="match status" value="1"/>
</dbReference>
<dbReference type="PANTHER" id="PTHR11931">
    <property type="entry name" value="PHOSPHOGLYCERATE MUTASE"/>
    <property type="match status" value="1"/>
</dbReference>
<dbReference type="Pfam" id="PF00300">
    <property type="entry name" value="His_Phos_1"/>
    <property type="match status" value="1"/>
</dbReference>
<dbReference type="PIRSF" id="PIRSF000709">
    <property type="entry name" value="6PFK_2-Ptase"/>
    <property type="match status" value="1"/>
</dbReference>
<dbReference type="SMART" id="SM00855">
    <property type="entry name" value="PGAM"/>
    <property type="match status" value="1"/>
</dbReference>
<dbReference type="SUPFAM" id="SSF53254">
    <property type="entry name" value="Phosphoglycerate mutase-like"/>
    <property type="match status" value="1"/>
</dbReference>
<keyword id="KW-0312">Gluconeogenesis</keyword>
<keyword id="KW-0324">Glycolysis</keyword>
<keyword id="KW-0413">Isomerase</keyword>
<sequence length="227" mass="25958">MELVFIRHGQSEWNAKNLFTGWRDVKLSEQGLAEAAAAGKKLKENGYEFDIAFTSVLTRAIKTCNIVLEESDQLFVPQIKTWRLNERHYGQLQGLDKKQTAEQYGDEQVRIWRRSYDTLPPLLDKDDEFSAHKDRRYAHLPADVVPDGENLKVTLERVLPFWEDQIAPAILSGKRVLVAAHGNSLRALAKHIEGISDKDIMGLEIPTGQPLVYKLDDNLKVLEKFYL</sequence>
<accession>A1KV25</accession>
<name>GPMA_NEIMF</name>
<evidence type="ECO:0000255" key="1">
    <source>
        <dbReference type="HAMAP-Rule" id="MF_01039"/>
    </source>
</evidence>
<proteinExistence type="inferred from homology"/>
<reference key="1">
    <citation type="journal article" date="2007" name="PLoS Genet.">
        <title>Meningococcal genetic variation mechanisms viewed through comparative analysis of serogroup C strain FAM18.</title>
        <authorList>
            <person name="Bentley S.D."/>
            <person name="Vernikos G.S."/>
            <person name="Snyder L.A.S."/>
            <person name="Churcher C."/>
            <person name="Arrowsmith C."/>
            <person name="Chillingworth T."/>
            <person name="Cronin A."/>
            <person name="Davis P.H."/>
            <person name="Holroyd N.E."/>
            <person name="Jagels K."/>
            <person name="Maddison M."/>
            <person name="Moule S."/>
            <person name="Rabbinowitsch E."/>
            <person name="Sharp S."/>
            <person name="Unwin L."/>
            <person name="Whitehead S."/>
            <person name="Quail M.A."/>
            <person name="Achtman M."/>
            <person name="Barrell B.G."/>
            <person name="Saunders N.J."/>
            <person name="Parkhill J."/>
        </authorList>
    </citation>
    <scope>NUCLEOTIDE SEQUENCE [LARGE SCALE GENOMIC DNA]</scope>
    <source>
        <strain>ATCC 700532 / DSM 15464 / FAM18</strain>
    </source>
</reference>
<feature type="chain" id="PRO_1000064081" description="2,3-bisphosphoglycerate-dependent phosphoglycerate mutase">
    <location>
        <begin position="1"/>
        <end position="227"/>
    </location>
</feature>
<feature type="active site" description="Tele-phosphohistidine intermediate" evidence="1">
    <location>
        <position position="8"/>
    </location>
</feature>
<feature type="active site" description="Proton donor/acceptor" evidence="1">
    <location>
        <position position="86"/>
    </location>
</feature>
<feature type="binding site" evidence="1">
    <location>
        <begin position="7"/>
        <end position="14"/>
    </location>
    <ligand>
        <name>substrate</name>
    </ligand>
</feature>
<feature type="binding site" evidence="1">
    <location>
        <begin position="20"/>
        <end position="21"/>
    </location>
    <ligand>
        <name>substrate</name>
    </ligand>
</feature>
<feature type="binding site" evidence="1">
    <location>
        <position position="59"/>
    </location>
    <ligand>
        <name>substrate</name>
    </ligand>
</feature>
<feature type="binding site" evidence="1">
    <location>
        <begin position="86"/>
        <end position="89"/>
    </location>
    <ligand>
        <name>substrate</name>
    </ligand>
</feature>
<feature type="binding site" evidence="1">
    <location>
        <position position="97"/>
    </location>
    <ligand>
        <name>substrate</name>
    </ligand>
</feature>
<feature type="binding site" evidence="1">
    <location>
        <begin position="113"/>
        <end position="114"/>
    </location>
    <ligand>
        <name>substrate</name>
    </ligand>
</feature>
<feature type="binding site" evidence="1">
    <location>
        <begin position="182"/>
        <end position="183"/>
    </location>
    <ligand>
        <name>substrate</name>
    </ligand>
</feature>
<feature type="site" description="Transition state stabilizer" evidence="1">
    <location>
        <position position="181"/>
    </location>
</feature>